<evidence type="ECO:0000250" key="1"/>
<evidence type="ECO:0000255" key="2">
    <source>
        <dbReference type="HAMAP-Rule" id="MF_01437"/>
    </source>
</evidence>
<comment type="function">
    <text evidence="2">Catalyzes the conversion of cytidine diphosphate diacylglycerol (CDP-DG) and glycerol 3-phosphate into phosphatidylglycerol. Essential for the synthesis of anionic phospholipids, thereby playing a role in balancing the ratio of zwitterionic and anionic phospholipids, which is thought to be important for normal membrane function.</text>
</comment>
<comment type="catalytic activity">
    <reaction evidence="2">
        <text>a CDP-1,2-diacyl-sn-glycerol + sn-glycerol 3-phosphate = a 1,2-diacyl-sn-glycero-3-phospho-(1'-sn-glycero-3'-phosphate) + CMP + H(+)</text>
        <dbReference type="Rhea" id="RHEA:12593"/>
        <dbReference type="ChEBI" id="CHEBI:15378"/>
        <dbReference type="ChEBI" id="CHEBI:57597"/>
        <dbReference type="ChEBI" id="CHEBI:58332"/>
        <dbReference type="ChEBI" id="CHEBI:60110"/>
        <dbReference type="ChEBI" id="CHEBI:60377"/>
        <dbReference type="EC" id="2.7.8.5"/>
    </reaction>
</comment>
<comment type="pathway">
    <text evidence="2">Phospholipid metabolism; phosphatidylglycerol biosynthesis; phosphatidylglycerol from CDP-diacylglycerol: step 1/2.</text>
</comment>
<comment type="subcellular location">
    <subcellularLocation>
        <location evidence="2">Cell inner membrane</location>
        <topology evidence="2">Multi-pass membrane protein</topology>
    </subcellularLocation>
</comment>
<comment type="similarity">
    <text evidence="2">Belongs to the CDP-alcohol phosphatidyltransferase class-I family.</text>
</comment>
<proteinExistence type="inferred from homology"/>
<reference key="1">
    <citation type="journal article" date="2005" name="Nucleic Acids Res.">
        <title>Genome dynamics and diversity of Shigella species, the etiologic agents of bacillary dysentery.</title>
        <authorList>
            <person name="Yang F."/>
            <person name="Yang J."/>
            <person name="Zhang X."/>
            <person name="Chen L."/>
            <person name="Jiang Y."/>
            <person name="Yan Y."/>
            <person name="Tang X."/>
            <person name="Wang J."/>
            <person name="Xiong Z."/>
            <person name="Dong J."/>
            <person name="Xue Y."/>
            <person name="Zhu Y."/>
            <person name="Xu X."/>
            <person name="Sun L."/>
            <person name="Chen S."/>
            <person name="Nie H."/>
            <person name="Peng J."/>
            <person name="Xu J."/>
            <person name="Wang Y."/>
            <person name="Yuan Z."/>
            <person name="Wen Y."/>
            <person name="Yao Z."/>
            <person name="Shen Y."/>
            <person name="Qiang B."/>
            <person name="Hou Y."/>
            <person name="Yu J."/>
            <person name="Jin Q."/>
        </authorList>
    </citation>
    <scope>NUCLEOTIDE SEQUENCE [LARGE SCALE GENOMIC DNA]</scope>
    <source>
        <strain>Sb227</strain>
    </source>
</reference>
<keyword id="KW-0997">Cell inner membrane</keyword>
<keyword id="KW-1003">Cell membrane</keyword>
<keyword id="KW-0444">Lipid biosynthesis</keyword>
<keyword id="KW-0443">Lipid metabolism</keyword>
<keyword id="KW-0472">Membrane</keyword>
<keyword id="KW-0594">Phospholipid biosynthesis</keyword>
<keyword id="KW-1208">Phospholipid metabolism</keyword>
<keyword id="KW-0808">Transferase</keyword>
<keyword id="KW-0812">Transmembrane</keyword>
<keyword id="KW-1133">Transmembrane helix</keyword>
<sequence>MQFNIPTLLTLFRVILIPFFVLVFYLPVTWSPFAAALIFCVAAVTDWFDGFLARRWNQSTRFGAFLDPVADKVLVAIAMVLVTEHYHSWWVTLPAATMIAREIIISALREWMAELGKRSSVAVSWIGKVKTTAQMVALAWLLWRPNIWVEYVGIALFFVAAVLTLWSMLQYLSAARADLLDQ</sequence>
<accession>Q322L9</accession>
<dbReference type="EC" id="2.7.8.5" evidence="2"/>
<dbReference type="EMBL" id="CP000036">
    <property type="protein sequence ID" value="ABB65739.1"/>
    <property type="molecule type" value="Genomic_DNA"/>
</dbReference>
<dbReference type="RefSeq" id="WP_001160190.1">
    <property type="nucleotide sequence ID" value="NC_007613.1"/>
</dbReference>
<dbReference type="SMR" id="Q322L9"/>
<dbReference type="KEGG" id="sbo:SBO_1094"/>
<dbReference type="HOGENOM" id="CLU_051314_2_1_6"/>
<dbReference type="UniPathway" id="UPA00084">
    <property type="reaction ID" value="UER00503"/>
</dbReference>
<dbReference type="Proteomes" id="UP000007067">
    <property type="component" value="Chromosome"/>
</dbReference>
<dbReference type="GO" id="GO:0005886">
    <property type="term" value="C:plasma membrane"/>
    <property type="evidence" value="ECO:0007669"/>
    <property type="project" value="UniProtKB-SubCell"/>
</dbReference>
<dbReference type="GO" id="GO:0008444">
    <property type="term" value="F:CDP-diacylglycerol-glycerol-3-phosphate 3-phosphatidyltransferase activity"/>
    <property type="evidence" value="ECO:0007669"/>
    <property type="project" value="UniProtKB-UniRule"/>
</dbReference>
<dbReference type="GO" id="GO:0006655">
    <property type="term" value="P:phosphatidylglycerol biosynthetic process"/>
    <property type="evidence" value="ECO:0007669"/>
    <property type="project" value="UniProtKB-UniRule"/>
</dbReference>
<dbReference type="FunFam" id="1.20.120.1760:FF:000001">
    <property type="entry name" value="CDP-diacylglycerol--glycerol-3-phosphate 3-phosphatidyltransferase"/>
    <property type="match status" value="1"/>
</dbReference>
<dbReference type="Gene3D" id="1.20.120.1760">
    <property type="match status" value="1"/>
</dbReference>
<dbReference type="HAMAP" id="MF_01437">
    <property type="entry name" value="PgsA"/>
    <property type="match status" value="1"/>
</dbReference>
<dbReference type="InterPro" id="IPR050324">
    <property type="entry name" value="CDP-alcohol_PTase-I"/>
</dbReference>
<dbReference type="InterPro" id="IPR000462">
    <property type="entry name" value="CDP-OH_P_trans"/>
</dbReference>
<dbReference type="InterPro" id="IPR043130">
    <property type="entry name" value="CDP-OH_PTrfase_TM_dom"/>
</dbReference>
<dbReference type="InterPro" id="IPR048254">
    <property type="entry name" value="CDP_ALCOHOL_P_TRANSF_CS"/>
</dbReference>
<dbReference type="InterPro" id="IPR023762">
    <property type="entry name" value="PGP_synthase_bac"/>
</dbReference>
<dbReference type="InterPro" id="IPR004570">
    <property type="entry name" value="Phosphatidylglycerol_P_synth"/>
</dbReference>
<dbReference type="NCBIfam" id="TIGR00560">
    <property type="entry name" value="pgsA"/>
    <property type="match status" value="1"/>
</dbReference>
<dbReference type="NCBIfam" id="NF008090">
    <property type="entry name" value="PRK10832.1"/>
    <property type="match status" value="1"/>
</dbReference>
<dbReference type="PANTHER" id="PTHR14269:SF62">
    <property type="entry name" value="CDP-DIACYLGLYCEROL--GLYCEROL-3-PHOSPHATE 3-PHOSPHATIDYLTRANSFERASE 1, CHLOROPLASTIC"/>
    <property type="match status" value="1"/>
</dbReference>
<dbReference type="PANTHER" id="PTHR14269">
    <property type="entry name" value="CDP-DIACYLGLYCEROL--GLYCEROL-3-PHOSPHATE 3-PHOSPHATIDYLTRANSFERASE-RELATED"/>
    <property type="match status" value="1"/>
</dbReference>
<dbReference type="Pfam" id="PF01066">
    <property type="entry name" value="CDP-OH_P_transf"/>
    <property type="match status" value="1"/>
</dbReference>
<dbReference type="PIRSF" id="PIRSF000847">
    <property type="entry name" value="Phos_ph_gly_syn"/>
    <property type="match status" value="1"/>
</dbReference>
<dbReference type="PROSITE" id="PS00379">
    <property type="entry name" value="CDP_ALCOHOL_P_TRANSF"/>
    <property type="match status" value="1"/>
</dbReference>
<name>PGSA_SHIBS</name>
<protein>
    <recommendedName>
        <fullName evidence="2">CDP-diacylglycerol--glycerol-3-phosphate 3-phosphatidyltransferase</fullName>
        <ecNumber evidence="2">2.7.8.5</ecNumber>
    </recommendedName>
    <alternativeName>
        <fullName evidence="2">Phosphatidylglycerophosphate synthase</fullName>
        <shortName evidence="2">PGP synthase</shortName>
    </alternativeName>
</protein>
<gene>
    <name evidence="2" type="primary">pgsA</name>
    <name type="ordered locus">SBO_1094</name>
</gene>
<feature type="initiator methionine" description="Removed" evidence="1">
    <location>
        <position position="1"/>
    </location>
</feature>
<feature type="chain" id="PRO_0000239129" description="CDP-diacylglycerol--glycerol-3-phosphate 3-phosphatidyltransferase">
    <location>
        <begin position="2"/>
        <end position="182"/>
    </location>
</feature>
<feature type="topological domain" description="Cytoplasmic" evidence="2">
    <location>
        <begin position="2"/>
        <end position="12"/>
    </location>
</feature>
<feature type="transmembrane region" description="Helical" evidence="2">
    <location>
        <begin position="13"/>
        <end position="37"/>
    </location>
</feature>
<feature type="topological domain" description="Periplasmic" evidence="2">
    <location>
        <begin position="38"/>
        <end position="60"/>
    </location>
</feature>
<feature type="transmembrane region" description="Helical" evidence="2">
    <location>
        <begin position="61"/>
        <end position="81"/>
    </location>
</feature>
<feature type="topological domain" description="Cytoplasmic" evidence="2">
    <location>
        <begin position="82"/>
        <end position="86"/>
    </location>
</feature>
<feature type="transmembrane region" description="Helical" evidence="2">
    <location>
        <begin position="87"/>
        <end position="107"/>
    </location>
</feature>
<feature type="topological domain" description="Periplasmic" evidence="2">
    <location>
        <begin position="108"/>
        <end position="145"/>
    </location>
</feature>
<feature type="transmembrane region" description="Helical" evidence="2">
    <location>
        <begin position="146"/>
        <end position="168"/>
    </location>
</feature>
<feature type="topological domain" description="Cytoplasmic" evidence="2">
    <location>
        <begin position="169"/>
        <end position="181"/>
    </location>
</feature>
<organism>
    <name type="scientific">Shigella boydii serotype 4 (strain Sb227)</name>
    <dbReference type="NCBI Taxonomy" id="300268"/>
    <lineage>
        <taxon>Bacteria</taxon>
        <taxon>Pseudomonadati</taxon>
        <taxon>Pseudomonadota</taxon>
        <taxon>Gammaproteobacteria</taxon>
        <taxon>Enterobacterales</taxon>
        <taxon>Enterobacteriaceae</taxon>
        <taxon>Shigella</taxon>
    </lineage>
</organism>